<sequence>MSKSIVLLPGDHVGTEVVAEAVKVLKAIERTTPGTSFSFSTHLIGGAAIDATGVPLPDEALEAAKASDAVLLGAVGGPKWGTGDVRPEQGLLKIRKELGLYANLRPCSFASSKLVDLSPLKREIVEGTDFVVVRELVGGIYFGERKEDDGSGVASDTETYSVPEVERITRMAAFLALQHNPPQTVWSLDKANVLASSRLWRKTVTRVMTEEFPTVPFQHQLIDSAAMILVQKPTKLNGVVLTSNMFGDIISDEASVIPGSLGLLPSASLASLPDTNTAFGLYEPCHGSAPDLPAGKVNPLACILSAAMMLRLSLDNAAAADRIEQAVREVIDSGVATADLGGSSSTGEVGDAIVKALEK</sequence>
<reference key="1">
    <citation type="thesis" date="2000" institute="University of Vienna" country="Austria">
        <authorList>
            <person name="Biasio W."/>
        </authorList>
    </citation>
    <scope>NUCLEOTIDE SEQUENCE [GENOMIC DNA]</scope>
    <source>
        <strain>ATCC 14830 / CBS 6330 / DSM 2031 / MS-5 / NRRL Y-17506</strain>
    </source>
</reference>
<organism>
    <name type="scientific">Diutina rugosa</name>
    <name type="common">Yeast</name>
    <name type="synonym">Candida rugosa</name>
    <dbReference type="NCBI Taxonomy" id="5481"/>
    <lineage>
        <taxon>Eukaryota</taxon>
        <taxon>Fungi</taxon>
        <taxon>Dikarya</taxon>
        <taxon>Ascomycota</taxon>
        <taxon>Saccharomycotina</taxon>
        <taxon>Pichiomycetes</taxon>
        <taxon>Debaryomycetaceae</taxon>
        <taxon>Diutina</taxon>
    </lineage>
</organism>
<evidence type="ECO:0000250" key="1"/>
<evidence type="ECO:0000305" key="2"/>
<gene>
    <name type="primary">LEU2</name>
</gene>
<protein>
    <recommendedName>
        <fullName>3-isopropylmalate dehydrogenase</fullName>
        <shortName>3-IPM-DH</shortName>
        <shortName>IMDH</shortName>
        <ecNumber>1.1.1.85</ecNumber>
    </recommendedName>
    <alternativeName>
        <fullName>Beta-IPM dehydrogenase</fullName>
    </alternativeName>
</protein>
<accession>Q9HDQ5</accession>
<name>LEU3_DIURU</name>
<comment type="function">
    <text>Catalyzes the oxidation of 3-carboxy-2-hydroxy-4-methylpentanoate (3-isopropylmalate) to 3-carboxy-4-methyl-2-oxopentanoate. The product decarboxylates to 4-methyl-2 oxopentanoate.</text>
</comment>
<comment type="catalytic activity">
    <reaction>
        <text>(2R,3S)-3-isopropylmalate + NAD(+) = 4-methyl-2-oxopentanoate + CO2 + NADH</text>
        <dbReference type="Rhea" id="RHEA:32271"/>
        <dbReference type="ChEBI" id="CHEBI:16526"/>
        <dbReference type="ChEBI" id="CHEBI:17865"/>
        <dbReference type="ChEBI" id="CHEBI:35121"/>
        <dbReference type="ChEBI" id="CHEBI:57540"/>
        <dbReference type="ChEBI" id="CHEBI:57945"/>
        <dbReference type="EC" id="1.1.1.85"/>
    </reaction>
</comment>
<comment type="cofactor">
    <cofactor evidence="1">
        <name>Mg(2+)</name>
        <dbReference type="ChEBI" id="CHEBI:18420"/>
    </cofactor>
    <cofactor evidence="1">
        <name>Mn(2+)</name>
        <dbReference type="ChEBI" id="CHEBI:29035"/>
    </cofactor>
    <text evidence="1">Binds 1 Mg(2+) or Mn(2+) ion per subunit.</text>
</comment>
<comment type="pathway">
    <text>Amino-acid biosynthesis; L-leucine biosynthesis; L-leucine from 3-methyl-2-oxobutanoate: step 3/4.</text>
</comment>
<comment type="subunit">
    <text evidence="1">Homodimer.</text>
</comment>
<comment type="subcellular location">
    <subcellularLocation>
        <location>Cytoplasm</location>
    </subcellularLocation>
</comment>
<comment type="similarity">
    <text evidence="2">Belongs to the isocitrate and isopropylmalate dehydrogenases family.</text>
</comment>
<feature type="chain" id="PRO_0000083606" description="3-isopropylmalate dehydrogenase">
    <location>
        <begin position="1"/>
        <end position="359"/>
    </location>
</feature>
<feature type="binding site" evidence="1">
    <location>
        <begin position="77"/>
        <end position="88"/>
    </location>
    <ligand>
        <name>NAD(+)</name>
        <dbReference type="ChEBI" id="CHEBI:57540"/>
    </ligand>
</feature>
<feature type="binding site" evidence="1">
    <location>
        <position position="95"/>
    </location>
    <ligand>
        <name>substrate</name>
    </ligand>
</feature>
<feature type="binding site" evidence="1">
    <location>
        <position position="105"/>
    </location>
    <ligand>
        <name>substrate</name>
    </ligand>
</feature>
<feature type="binding site" evidence="1">
    <location>
        <position position="134"/>
    </location>
    <ligand>
        <name>substrate</name>
    </ligand>
</feature>
<feature type="binding site" evidence="1">
    <location>
        <position position="223"/>
    </location>
    <ligand>
        <name>Mg(2+)</name>
        <dbReference type="ChEBI" id="CHEBI:18420"/>
    </ligand>
</feature>
<feature type="binding site" evidence="1">
    <location>
        <position position="223"/>
    </location>
    <ligand>
        <name>substrate</name>
    </ligand>
</feature>
<feature type="binding site" evidence="1">
    <location>
        <position position="248"/>
    </location>
    <ligand>
        <name>Mg(2+)</name>
        <dbReference type="ChEBI" id="CHEBI:18420"/>
    </ligand>
</feature>
<feature type="binding site" evidence="1">
    <location>
        <position position="252"/>
    </location>
    <ligand>
        <name>Mg(2+)</name>
        <dbReference type="ChEBI" id="CHEBI:18420"/>
    </ligand>
</feature>
<feature type="binding site" evidence="1">
    <location>
        <begin position="287"/>
        <end position="298"/>
    </location>
    <ligand>
        <name>NAD(+)</name>
        <dbReference type="ChEBI" id="CHEBI:57540"/>
    </ligand>
</feature>
<feature type="site" description="Important for catalysis" evidence="1">
    <location>
        <position position="141"/>
    </location>
</feature>
<feature type="site" description="Important for catalysis" evidence="1">
    <location>
        <position position="190"/>
    </location>
</feature>
<proteinExistence type="inferred from homology"/>
<keyword id="KW-0028">Amino-acid biosynthesis</keyword>
<keyword id="KW-0100">Branched-chain amino acid biosynthesis</keyword>
<keyword id="KW-0963">Cytoplasm</keyword>
<keyword id="KW-0432">Leucine biosynthesis</keyword>
<keyword id="KW-0460">Magnesium</keyword>
<keyword id="KW-0464">Manganese</keyword>
<keyword id="KW-0479">Metal-binding</keyword>
<keyword id="KW-0520">NAD</keyword>
<keyword id="KW-0560">Oxidoreductase</keyword>
<dbReference type="EC" id="1.1.1.85"/>
<dbReference type="EMBL" id="AJ279020">
    <property type="protein sequence ID" value="CAC10274.1"/>
    <property type="molecule type" value="Genomic_DNA"/>
</dbReference>
<dbReference type="SMR" id="Q9HDQ5"/>
<dbReference type="VEuPathDB" id="FungiDB:DIURU_004773"/>
<dbReference type="UniPathway" id="UPA00048">
    <property type="reaction ID" value="UER00072"/>
</dbReference>
<dbReference type="GO" id="GO:0005829">
    <property type="term" value="C:cytosol"/>
    <property type="evidence" value="ECO:0007669"/>
    <property type="project" value="TreeGrafter"/>
</dbReference>
<dbReference type="GO" id="GO:0003862">
    <property type="term" value="F:3-isopropylmalate dehydrogenase activity"/>
    <property type="evidence" value="ECO:0007669"/>
    <property type="project" value="UniProtKB-EC"/>
</dbReference>
<dbReference type="GO" id="GO:0000287">
    <property type="term" value="F:magnesium ion binding"/>
    <property type="evidence" value="ECO:0007669"/>
    <property type="project" value="InterPro"/>
</dbReference>
<dbReference type="GO" id="GO:0051287">
    <property type="term" value="F:NAD binding"/>
    <property type="evidence" value="ECO:0007669"/>
    <property type="project" value="InterPro"/>
</dbReference>
<dbReference type="GO" id="GO:0009098">
    <property type="term" value="P:L-leucine biosynthetic process"/>
    <property type="evidence" value="ECO:0007669"/>
    <property type="project" value="UniProtKB-UniPathway"/>
</dbReference>
<dbReference type="FunFam" id="3.40.718.10:FF:000006">
    <property type="entry name" value="3-isopropylmalate dehydrogenase"/>
    <property type="match status" value="1"/>
</dbReference>
<dbReference type="Gene3D" id="3.40.718.10">
    <property type="entry name" value="Isopropylmalate Dehydrogenase"/>
    <property type="match status" value="1"/>
</dbReference>
<dbReference type="InterPro" id="IPR019818">
    <property type="entry name" value="IsoCit/isopropylmalate_DH_CS"/>
</dbReference>
<dbReference type="InterPro" id="IPR024084">
    <property type="entry name" value="IsoPropMal-DH-like_dom"/>
</dbReference>
<dbReference type="InterPro" id="IPR004429">
    <property type="entry name" value="Isopropylmalate_DH"/>
</dbReference>
<dbReference type="NCBIfam" id="TIGR00169">
    <property type="entry name" value="leuB"/>
    <property type="match status" value="1"/>
</dbReference>
<dbReference type="PANTHER" id="PTHR42979">
    <property type="entry name" value="3-ISOPROPYLMALATE DEHYDROGENASE"/>
    <property type="match status" value="1"/>
</dbReference>
<dbReference type="PANTHER" id="PTHR42979:SF1">
    <property type="entry name" value="3-ISOPROPYLMALATE DEHYDROGENASE"/>
    <property type="match status" value="1"/>
</dbReference>
<dbReference type="Pfam" id="PF00180">
    <property type="entry name" value="Iso_dh"/>
    <property type="match status" value="1"/>
</dbReference>
<dbReference type="SMART" id="SM01329">
    <property type="entry name" value="Iso_dh"/>
    <property type="match status" value="1"/>
</dbReference>
<dbReference type="SUPFAM" id="SSF53659">
    <property type="entry name" value="Isocitrate/Isopropylmalate dehydrogenase-like"/>
    <property type="match status" value="1"/>
</dbReference>
<dbReference type="PROSITE" id="PS00470">
    <property type="entry name" value="IDH_IMDH"/>
    <property type="match status" value="1"/>
</dbReference>